<reference key="1">
    <citation type="journal article" date="2011" name="J. Bacteriol.">
        <title>Complete genome sequence and updated annotation of Desulfovibrio alaskensis G20.</title>
        <authorList>
            <person name="Hauser L.J."/>
            <person name="Land M.L."/>
            <person name="Brown S.D."/>
            <person name="Larimer F."/>
            <person name="Keller K.L."/>
            <person name="Rapp-Giles B.J."/>
            <person name="Price M.N."/>
            <person name="Lin M."/>
            <person name="Bruce D.C."/>
            <person name="Detter J.C."/>
            <person name="Tapia R."/>
            <person name="Han C.S."/>
            <person name="Goodwin L.A."/>
            <person name="Cheng J.F."/>
            <person name="Pitluck S."/>
            <person name="Copeland A."/>
            <person name="Lucas S."/>
            <person name="Nolan M."/>
            <person name="Lapidus A.L."/>
            <person name="Palumbo A.V."/>
            <person name="Wall J.D."/>
        </authorList>
    </citation>
    <scope>NUCLEOTIDE SEQUENCE [LARGE SCALE GENOMIC DNA]</scope>
    <source>
        <strain>ATCC BAA-1058 / DSM 17464 / G20</strain>
    </source>
</reference>
<keyword id="KW-1185">Reference proteome</keyword>
<keyword id="KW-0687">Ribonucleoprotein</keyword>
<keyword id="KW-0689">Ribosomal protein</keyword>
<protein>
    <recommendedName>
        <fullName evidence="1">Large ribosomal subunit protein bL17</fullName>
    </recommendedName>
    <alternativeName>
        <fullName evidence="3">50S ribosomal protein L17</fullName>
    </alternativeName>
</protein>
<name>RL17_OLEA2</name>
<organism>
    <name type="scientific">Oleidesulfovibrio alaskensis (strain ATCC BAA-1058 / DSM 17464 / G20)</name>
    <name type="common">Desulfovibrio alaskensis</name>
    <dbReference type="NCBI Taxonomy" id="207559"/>
    <lineage>
        <taxon>Bacteria</taxon>
        <taxon>Pseudomonadati</taxon>
        <taxon>Thermodesulfobacteriota</taxon>
        <taxon>Desulfovibrionia</taxon>
        <taxon>Desulfovibrionales</taxon>
        <taxon>Desulfovibrionaceae</taxon>
        <taxon>Oleidesulfovibrio</taxon>
    </lineage>
</organism>
<feature type="chain" id="PRO_0000267867" description="Large ribosomal subunit protein bL17">
    <location>
        <begin position="1"/>
        <end position="162"/>
    </location>
</feature>
<feature type="region of interest" description="Disordered" evidence="2">
    <location>
        <begin position="125"/>
        <end position="162"/>
    </location>
</feature>
<feature type="compositionally biased region" description="Basic and acidic residues" evidence="2">
    <location>
        <begin position="125"/>
        <end position="140"/>
    </location>
</feature>
<sequence>MRHRKSGRKLNRSSSHRSALFRNMAKSLLTYGKIRTTEAKAKELRGVVEPLITLALRNDLHARRQAYKVLGSHQLVKRLFDEIGPKFVGVPGGYTRVLKLGAPRPGDNAPMAVIELTRLGDAEAAAKEAPAKEVAEEKAAKPAKKAAPKKAEKEEAEDAAEA</sequence>
<comment type="subunit">
    <text evidence="1">Part of the 50S ribosomal subunit. Contacts protein L32.</text>
</comment>
<comment type="similarity">
    <text evidence="1">Belongs to the bacterial ribosomal protein bL17 family.</text>
</comment>
<evidence type="ECO:0000255" key="1">
    <source>
        <dbReference type="HAMAP-Rule" id="MF_01368"/>
    </source>
</evidence>
<evidence type="ECO:0000256" key="2">
    <source>
        <dbReference type="SAM" id="MobiDB-lite"/>
    </source>
</evidence>
<evidence type="ECO:0000305" key="3"/>
<accession>Q30Z69</accession>
<proteinExistence type="inferred from homology"/>
<gene>
    <name evidence="1" type="primary">rplQ</name>
    <name type="ordered locus">Dde_2230</name>
</gene>
<dbReference type="EMBL" id="CP000112">
    <property type="protein sequence ID" value="ABB39027.1"/>
    <property type="molecule type" value="Genomic_DNA"/>
</dbReference>
<dbReference type="RefSeq" id="WP_011368118.1">
    <property type="nucleotide sequence ID" value="NC_007519.1"/>
</dbReference>
<dbReference type="SMR" id="Q30Z69"/>
<dbReference type="STRING" id="207559.Dde_2230"/>
<dbReference type="KEGG" id="dde:Dde_2230"/>
<dbReference type="eggNOG" id="COG0203">
    <property type="taxonomic scope" value="Bacteria"/>
</dbReference>
<dbReference type="HOGENOM" id="CLU_074407_2_0_7"/>
<dbReference type="Proteomes" id="UP000002710">
    <property type="component" value="Chromosome"/>
</dbReference>
<dbReference type="GO" id="GO:0022625">
    <property type="term" value="C:cytosolic large ribosomal subunit"/>
    <property type="evidence" value="ECO:0007669"/>
    <property type="project" value="TreeGrafter"/>
</dbReference>
<dbReference type="GO" id="GO:0003735">
    <property type="term" value="F:structural constituent of ribosome"/>
    <property type="evidence" value="ECO:0007669"/>
    <property type="project" value="InterPro"/>
</dbReference>
<dbReference type="GO" id="GO:0006412">
    <property type="term" value="P:translation"/>
    <property type="evidence" value="ECO:0007669"/>
    <property type="project" value="UniProtKB-UniRule"/>
</dbReference>
<dbReference type="FunFam" id="3.90.1030.10:FF:000001">
    <property type="entry name" value="50S ribosomal protein L17"/>
    <property type="match status" value="1"/>
</dbReference>
<dbReference type="Gene3D" id="3.90.1030.10">
    <property type="entry name" value="Ribosomal protein L17"/>
    <property type="match status" value="1"/>
</dbReference>
<dbReference type="HAMAP" id="MF_01368">
    <property type="entry name" value="Ribosomal_bL17"/>
    <property type="match status" value="1"/>
</dbReference>
<dbReference type="InterPro" id="IPR000456">
    <property type="entry name" value="Ribosomal_bL17"/>
</dbReference>
<dbReference type="InterPro" id="IPR036373">
    <property type="entry name" value="Ribosomal_bL17_sf"/>
</dbReference>
<dbReference type="NCBIfam" id="TIGR00059">
    <property type="entry name" value="L17"/>
    <property type="match status" value="1"/>
</dbReference>
<dbReference type="PANTHER" id="PTHR14413:SF16">
    <property type="entry name" value="LARGE RIBOSOMAL SUBUNIT PROTEIN BL17M"/>
    <property type="match status" value="1"/>
</dbReference>
<dbReference type="PANTHER" id="PTHR14413">
    <property type="entry name" value="RIBOSOMAL PROTEIN L17"/>
    <property type="match status" value="1"/>
</dbReference>
<dbReference type="Pfam" id="PF01196">
    <property type="entry name" value="Ribosomal_L17"/>
    <property type="match status" value="1"/>
</dbReference>
<dbReference type="SUPFAM" id="SSF64263">
    <property type="entry name" value="Prokaryotic ribosomal protein L17"/>
    <property type="match status" value="1"/>
</dbReference>